<reference key="1">
    <citation type="journal article" date="2008" name="J. Biotechnol.">
        <title>The genome of Xanthomonas campestris pv. campestris B100 and its use for the reconstruction of metabolic pathways involved in xanthan biosynthesis.</title>
        <authorList>
            <person name="Vorhoelter F.-J."/>
            <person name="Schneiker S."/>
            <person name="Goesmann A."/>
            <person name="Krause L."/>
            <person name="Bekel T."/>
            <person name="Kaiser O."/>
            <person name="Linke B."/>
            <person name="Patschkowski T."/>
            <person name="Rueckert C."/>
            <person name="Schmid J."/>
            <person name="Sidhu V.K."/>
            <person name="Sieber V."/>
            <person name="Tauch A."/>
            <person name="Watt S.A."/>
            <person name="Weisshaar B."/>
            <person name="Becker A."/>
            <person name="Niehaus K."/>
            <person name="Puehler A."/>
        </authorList>
    </citation>
    <scope>NUCLEOTIDE SEQUENCE [LARGE SCALE GENOMIC DNA]</scope>
    <source>
        <strain>B100</strain>
    </source>
</reference>
<proteinExistence type="inferred from homology"/>
<dbReference type="EC" id="2.3.3.13" evidence="1"/>
<dbReference type="EMBL" id="AM920689">
    <property type="protein sequence ID" value="CAP50213.1"/>
    <property type="molecule type" value="Genomic_DNA"/>
</dbReference>
<dbReference type="SMR" id="B0RP28"/>
<dbReference type="KEGG" id="xca:xcc-b100_0870"/>
<dbReference type="HOGENOM" id="CLU_022158_0_1_6"/>
<dbReference type="UniPathway" id="UPA00048">
    <property type="reaction ID" value="UER00070"/>
</dbReference>
<dbReference type="Proteomes" id="UP000001188">
    <property type="component" value="Chromosome"/>
</dbReference>
<dbReference type="GO" id="GO:0005829">
    <property type="term" value="C:cytosol"/>
    <property type="evidence" value="ECO:0007669"/>
    <property type="project" value="TreeGrafter"/>
</dbReference>
<dbReference type="GO" id="GO:0003852">
    <property type="term" value="F:2-isopropylmalate synthase activity"/>
    <property type="evidence" value="ECO:0007669"/>
    <property type="project" value="UniProtKB-UniRule"/>
</dbReference>
<dbReference type="GO" id="GO:0003985">
    <property type="term" value="F:acetyl-CoA C-acetyltransferase activity"/>
    <property type="evidence" value="ECO:0007669"/>
    <property type="project" value="UniProtKB-UniRule"/>
</dbReference>
<dbReference type="GO" id="GO:0030145">
    <property type="term" value="F:manganese ion binding"/>
    <property type="evidence" value="ECO:0007669"/>
    <property type="project" value="UniProtKB-UniRule"/>
</dbReference>
<dbReference type="GO" id="GO:0009098">
    <property type="term" value="P:L-leucine biosynthetic process"/>
    <property type="evidence" value="ECO:0007669"/>
    <property type="project" value="UniProtKB-UniRule"/>
</dbReference>
<dbReference type="CDD" id="cd07940">
    <property type="entry name" value="DRE_TIM_IPMS"/>
    <property type="match status" value="1"/>
</dbReference>
<dbReference type="FunFam" id="1.10.238.260:FF:000001">
    <property type="entry name" value="2-isopropylmalate synthase"/>
    <property type="match status" value="1"/>
</dbReference>
<dbReference type="FunFam" id="3.20.20.70:FF:000010">
    <property type="entry name" value="2-isopropylmalate synthase"/>
    <property type="match status" value="1"/>
</dbReference>
<dbReference type="FunFam" id="3.30.160.270:FF:000003">
    <property type="entry name" value="2-isopropylmalate synthase"/>
    <property type="match status" value="1"/>
</dbReference>
<dbReference type="Gene3D" id="1.10.238.260">
    <property type="match status" value="1"/>
</dbReference>
<dbReference type="Gene3D" id="3.30.160.270">
    <property type="match status" value="1"/>
</dbReference>
<dbReference type="Gene3D" id="3.20.20.70">
    <property type="entry name" value="Aldolase class I"/>
    <property type="match status" value="1"/>
</dbReference>
<dbReference type="HAMAP" id="MF_01025">
    <property type="entry name" value="LeuA_type1"/>
    <property type="match status" value="1"/>
</dbReference>
<dbReference type="InterPro" id="IPR050073">
    <property type="entry name" value="2-IPM_HCS-like"/>
</dbReference>
<dbReference type="InterPro" id="IPR013709">
    <property type="entry name" value="2-isopropylmalate_synth_dimer"/>
</dbReference>
<dbReference type="InterPro" id="IPR002034">
    <property type="entry name" value="AIPM/Hcit_synth_CS"/>
</dbReference>
<dbReference type="InterPro" id="IPR013785">
    <property type="entry name" value="Aldolase_TIM"/>
</dbReference>
<dbReference type="InterPro" id="IPR054691">
    <property type="entry name" value="LeuA/HCS_post-cat"/>
</dbReference>
<dbReference type="InterPro" id="IPR036230">
    <property type="entry name" value="LeuA_allosteric_dom_sf"/>
</dbReference>
<dbReference type="InterPro" id="IPR005671">
    <property type="entry name" value="LeuA_bact_synth"/>
</dbReference>
<dbReference type="InterPro" id="IPR000891">
    <property type="entry name" value="PYR_CT"/>
</dbReference>
<dbReference type="NCBIfam" id="TIGR00973">
    <property type="entry name" value="leuA_bact"/>
    <property type="match status" value="1"/>
</dbReference>
<dbReference type="NCBIfam" id="NF002086">
    <property type="entry name" value="PRK00915.1-3"/>
    <property type="match status" value="1"/>
</dbReference>
<dbReference type="PANTHER" id="PTHR10277:SF9">
    <property type="entry name" value="2-ISOPROPYLMALATE SYNTHASE 1, CHLOROPLASTIC-RELATED"/>
    <property type="match status" value="1"/>
</dbReference>
<dbReference type="PANTHER" id="PTHR10277">
    <property type="entry name" value="HOMOCITRATE SYNTHASE-RELATED"/>
    <property type="match status" value="1"/>
</dbReference>
<dbReference type="Pfam" id="PF22617">
    <property type="entry name" value="HCS_D2"/>
    <property type="match status" value="1"/>
</dbReference>
<dbReference type="Pfam" id="PF00682">
    <property type="entry name" value="HMGL-like"/>
    <property type="match status" value="1"/>
</dbReference>
<dbReference type="Pfam" id="PF08502">
    <property type="entry name" value="LeuA_dimer"/>
    <property type="match status" value="1"/>
</dbReference>
<dbReference type="SMART" id="SM00917">
    <property type="entry name" value="LeuA_dimer"/>
    <property type="match status" value="1"/>
</dbReference>
<dbReference type="SUPFAM" id="SSF110921">
    <property type="entry name" value="2-isopropylmalate synthase LeuA, allosteric (dimerisation) domain"/>
    <property type="match status" value="1"/>
</dbReference>
<dbReference type="SUPFAM" id="SSF51569">
    <property type="entry name" value="Aldolase"/>
    <property type="match status" value="1"/>
</dbReference>
<dbReference type="PROSITE" id="PS00815">
    <property type="entry name" value="AIPM_HOMOCIT_SYNTH_1"/>
    <property type="match status" value="1"/>
</dbReference>
<dbReference type="PROSITE" id="PS00816">
    <property type="entry name" value="AIPM_HOMOCIT_SYNTH_2"/>
    <property type="match status" value="1"/>
</dbReference>
<dbReference type="PROSITE" id="PS50991">
    <property type="entry name" value="PYR_CT"/>
    <property type="match status" value="1"/>
</dbReference>
<evidence type="ECO:0000255" key="1">
    <source>
        <dbReference type="HAMAP-Rule" id="MF_01025"/>
    </source>
</evidence>
<gene>
    <name evidence="1" type="primary">leuA</name>
    <name type="ordered locus">xcc-b100_0870</name>
</gene>
<organism>
    <name type="scientific">Xanthomonas campestris pv. campestris (strain B100)</name>
    <dbReference type="NCBI Taxonomy" id="509169"/>
    <lineage>
        <taxon>Bacteria</taxon>
        <taxon>Pseudomonadati</taxon>
        <taxon>Pseudomonadota</taxon>
        <taxon>Gammaproteobacteria</taxon>
        <taxon>Lysobacterales</taxon>
        <taxon>Lysobacteraceae</taxon>
        <taxon>Xanthomonas</taxon>
    </lineage>
</organism>
<keyword id="KW-0028">Amino-acid biosynthesis</keyword>
<keyword id="KW-0100">Branched-chain amino acid biosynthesis</keyword>
<keyword id="KW-0963">Cytoplasm</keyword>
<keyword id="KW-0432">Leucine biosynthesis</keyword>
<keyword id="KW-0464">Manganese</keyword>
<keyword id="KW-0479">Metal-binding</keyword>
<keyword id="KW-0808">Transferase</keyword>
<protein>
    <recommendedName>
        <fullName evidence="1">2-isopropylmalate synthase</fullName>
        <ecNumber evidence="1">2.3.3.13</ecNumber>
    </recommendedName>
    <alternativeName>
        <fullName evidence="1">Alpha-IPM synthase</fullName>
    </alternativeName>
    <alternativeName>
        <fullName evidence="1">Alpha-isopropylmalate synthase</fullName>
    </alternativeName>
</protein>
<name>LEU1_XANCB</name>
<accession>B0RP28</accession>
<comment type="function">
    <text evidence="1">Catalyzes the condensation of the acetyl group of acetyl-CoA with 3-methyl-2-oxobutanoate (2-ketoisovalerate) to form 3-carboxy-3-hydroxy-4-methylpentanoate (2-isopropylmalate).</text>
</comment>
<comment type="catalytic activity">
    <reaction evidence="1">
        <text>3-methyl-2-oxobutanoate + acetyl-CoA + H2O = (2S)-2-isopropylmalate + CoA + H(+)</text>
        <dbReference type="Rhea" id="RHEA:21524"/>
        <dbReference type="ChEBI" id="CHEBI:1178"/>
        <dbReference type="ChEBI" id="CHEBI:11851"/>
        <dbReference type="ChEBI" id="CHEBI:15377"/>
        <dbReference type="ChEBI" id="CHEBI:15378"/>
        <dbReference type="ChEBI" id="CHEBI:57287"/>
        <dbReference type="ChEBI" id="CHEBI:57288"/>
        <dbReference type="EC" id="2.3.3.13"/>
    </reaction>
</comment>
<comment type="cofactor">
    <cofactor evidence="1">
        <name>Mn(2+)</name>
        <dbReference type="ChEBI" id="CHEBI:29035"/>
    </cofactor>
</comment>
<comment type="pathway">
    <text evidence="1">Amino-acid biosynthesis; L-leucine biosynthesis; L-leucine from 3-methyl-2-oxobutanoate: step 1/4.</text>
</comment>
<comment type="subunit">
    <text evidence="1">Homodimer.</text>
</comment>
<comment type="subcellular location">
    <subcellularLocation>
        <location evidence="1">Cytoplasm</location>
    </subcellularLocation>
</comment>
<comment type="similarity">
    <text evidence="1">Belongs to the alpha-IPM synthase/homocitrate synthase family. LeuA type 1 subfamily.</text>
</comment>
<feature type="chain" id="PRO_1000149334" description="2-isopropylmalate synthase">
    <location>
        <begin position="1"/>
        <end position="520"/>
    </location>
</feature>
<feature type="domain" description="Pyruvate carboxyltransferase" evidence="1">
    <location>
        <begin position="12"/>
        <end position="274"/>
    </location>
</feature>
<feature type="region of interest" description="Regulatory domain" evidence="1">
    <location>
        <begin position="396"/>
        <end position="520"/>
    </location>
</feature>
<feature type="binding site" evidence="1">
    <location>
        <position position="21"/>
    </location>
    <ligand>
        <name>Mn(2+)</name>
        <dbReference type="ChEBI" id="CHEBI:29035"/>
    </ligand>
</feature>
<feature type="binding site" evidence="1">
    <location>
        <position position="209"/>
    </location>
    <ligand>
        <name>Mn(2+)</name>
        <dbReference type="ChEBI" id="CHEBI:29035"/>
    </ligand>
</feature>
<feature type="binding site" evidence="1">
    <location>
        <position position="211"/>
    </location>
    <ligand>
        <name>Mn(2+)</name>
        <dbReference type="ChEBI" id="CHEBI:29035"/>
    </ligand>
</feature>
<feature type="binding site" evidence="1">
    <location>
        <position position="245"/>
    </location>
    <ligand>
        <name>Mn(2+)</name>
        <dbReference type="ChEBI" id="CHEBI:29035"/>
    </ligand>
</feature>
<sequence length="520" mass="56222">MNTTVSNQTPHIRIFDTTLRDGEQSPGCSMTPQQKLVMARALDALGVDIIETGFPASSYSDREAVAMMGRELRRPTLAVLSRCLQADIEISARALEAAANPRLHVFLSTSPLHREHKLRMSREQVLESVHKHVTLARGYIDDIEFSAEDATRTEEDFLAEVTRVAIAAGATTINLPDTVGFTTPEEIRGMFSRLIASVEGAEKVIFSTHCHNDLGLAAANSLAAIEGGARQVECTINGIGERAGNCALEEITMALKVRGAFYNLDTAINTPRIVSTSQLLQRLVGMPVQRNKAVVGGNAFAHESGIHQHGMLRHRGTYEIMRPEDVGWESSQMVLGRHSGRAAVEQRLRALGYLLEEDEAKLVFEQFKALCEKQRVVTDADLQALMQDATVQEGYRLASMTISDVGSRANALVELSDPDGNRVAETAQGNGPVDALFGALASATGVKLELDSYQVHSVGIGADARGEASLSVRHDGVEYEGTGTSKDIIEASALAWLDVANRLLRQRERGVVAGKTAAVA</sequence>